<proteinExistence type="evidence at protein level"/>
<name>ADHC1_MYCS2</name>
<feature type="chain" id="PRO_0000396948" description="NADP-dependent alcohol dehydrogenase C 1">
    <location>
        <begin position="1"/>
        <end position="349"/>
    </location>
</feature>
<feature type="binding site" evidence="1">
    <location>
        <position position="41"/>
    </location>
    <ligand>
        <name>Zn(2+)</name>
        <dbReference type="ChEBI" id="CHEBI:29105"/>
        <label>1</label>
        <note>catalytic</note>
    </ligand>
</feature>
<feature type="binding site" evidence="1">
    <location>
        <position position="63"/>
    </location>
    <ligand>
        <name>Zn(2+)</name>
        <dbReference type="ChEBI" id="CHEBI:29105"/>
        <label>1</label>
        <note>catalytic</note>
    </ligand>
</feature>
<feature type="binding site" evidence="1">
    <location>
        <position position="94"/>
    </location>
    <ligand>
        <name>Zn(2+)</name>
        <dbReference type="ChEBI" id="CHEBI:29105"/>
        <label>2</label>
    </ligand>
</feature>
<feature type="binding site" evidence="1">
    <location>
        <position position="97"/>
    </location>
    <ligand>
        <name>Zn(2+)</name>
        <dbReference type="ChEBI" id="CHEBI:29105"/>
        <label>2</label>
    </ligand>
</feature>
<feature type="binding site" evidence="1">
    <location>
        <position position="100"/>
    </location>
    <ligand>
        <name>Zn(2+)</name>
        <dbReference type="ChEBI" id="CHEBI:29105"/>
        <label>2</label>
    </ligand>
</feature>
<feature type="binding site" evidence="1">
    <location>
        <position position="108"/>
    </location>
    <ligand>
        <name>Zn(2+)</name>
        <dbReference type="ChEBI" id="CHEBI:29105"/>
        <label>2</label>
    </ligand>
</feature>
<feature type="binding site" evidence="1">
    <location>
        <position position="159"/>
    </location>
    <ligand>
        <name>Zn(2+)</name>
        <dbReference type="ChEBI" id="CHEBI:29105"/>
        <label>1</label>
        <note>catalytic</note>
    </ligand>
</feature>
<feature type="cross-link" description="Isoglutamyl lysine isopeptide (Lys-Gln) (interchain with Q-Cter in protein Pup)" evidence="4">
    <location>
        <position position="210"/>
    </location>
</feature>
<feature type="sequence conflict" description="In Ref. 1; CAC35017." evidence="5" ref="1">
    <location>
        <position position="143"/>
    </location>
</feature>
<feature type="sequence conflict" description="In Ref. 1; CAC35017." evidence="5" ref="1">
    <original>P</original>
    <variation>S</variation>
    <location>
        <position position="150"/>
    </location>
</feature>
<feature type="sequence conflict" description="In Ref. 1; CAC35017." evidence="5" ref="1">
    <original>A</original>
    <variation>R</variation>
    <location>
        <position position="220"/>
    </location>
</feature>
<protein>
    <recommendedName>
        <fullName>NADP-dependent alcohol dehydrogenase C 1</fullName>
        <shortName>Ms-ADHC 1</shortName>
        <ecNumber>1.1.1.2</ecNumber>
    </recommendedName>
</protein>
<accession>P0CH36</accession>
<accession>A0QR97</accession>
<accession>I7FIW6</accession>
<accession>Q9AE96</accession>
<sequence>MSTVSAYAATSATEPLTKTTITRRAVGPHDVAFDIHFAGICHSDIHTVKAEWGVPNYPVVPGHEIAGVVTEVGSEVTKYKVGDRVGVGCFVDSCRECDNCKAGLEQYCTGTGMVGTYNAIDRDGTPTHGGYSGAIVVDENYVLRIPDSLPLDAAAPLLCAGITTYSPLRHWNAGPGKKVAVIGLGGLGHVAVKLAKAMGADVTVLSQSLKKMEDGLRLGASAYYATSDPETFDKLAGSFDLILNTVSANLDLGAYLGLLKLDGALVELGLPEHPMEVPAFPLLAQRRNLTGSMIGGIPETQEMLDFCAEHDVRPEIEIITPDYINEAYERVLASDVRYRFVIDTASLRS</sequence>
<organism>
    <name type="scientific">Mycolicibacterium smegmatis (strain ATCC 700084 / mc(2)155)</name>
    <name type="common">Mycobacterium smegmatis</name>
    <dbReference type="NCBI Taxonomy" id="246196"/>
    <lineage>
        <taxon>Bacteria</taxon>
        <taxon>Bacillati</taxon>
        <taxon>Actinomycetota</taxon>
        <taxon>Actinomycetes</taxon>
        <taxon>Mycobacteriales</taxon>
        <taxon>Mycobacteriaceae</taxon>
        <taxon>Mycolicibacterium</taxon>
    </lineage>
</organism>
<gene>
    <name type="primary">adhc1</name>
    <name type="synonym">adh</name>
    <name type="ordered locus">MSMEG_1037</name>
    <name type="ordered locus">MSMEI_1007</name>
</gene>
<reference key="1">
    <citation type="journal article" date="2001" name="FEMS Microbiol. Lett.">
        <title>Molecular and biochemical characterisation of Mycobacterium smegmatis alcohol dehydrogenase C.</title>
        <authorList>
            <person name="Galamba A."/>
            <person name="Soetaert K."/>
            <person name="Buyssens P."/>
            <person name="Monnaie D."/>
            <person name="Jacobs P."/>
            <person name="Content J."/>
        </authorList>
    </citation>
    <scope>NUCLEOTIDE SEQUENCE [GENOMIC DNA]</scope>
    <scope>PROTEIN SEQUENCE OF 1-14</scope>
    <scope>BIOPHYSICOCHEMICAL PROPERTIES</scope>
    <scope>INDUCTION</scope>
</reference>
<reference key="2">
    <citation type="submission" date="2006-10" db="EMBL/GenBank/DDBJ databases">
        <authorList>
            <person name="Fleischmann R.D."/>
            <person name="Dodson R.J."/>
            <person name="Haft D.H."/>
            <person name="Merkel J.S."/>
            <person name="Nelson W.C."/>
            <person name="Fraser C.M."/>
        </authorList>
    </citation>
    <scope>NUCLEOTIDE SEQUENCE [LARGE SCALE GENOMIC DNA]</scope>
    <source>
        <strain>ATCC 700084 / mc(2)155</strain>
    </source>
</reference>
<reference key="3">
    <citation type="journal article" date="2007" name="Genome Biol.">
        <title>Interrupted coding sequences in Mycobacterium smegmatis: authentic mutations or sequencing errors?</title>
        <authorList>
            <person name="Deshayes C."/>
            <person name="Perrodou E."/>
            <person name="Gallien S."/>
            <person name="Euphrasie D."/>
            <person name="Schaeffer C."/>
            <person name="Van-Dorsselaer A."/>
            <person name="Poch O."/>
            <person name="Lecompte O."/>
            <person name="Reyrat J.-M."/>
        </authorList>
    </citation>
    <scope>NUCLEOTIDE SEQUENCE [LARGE SCALE GENOMIC DNA]</scope>
    <source>
        <strain>ATCC 700084 / mc(2)155</strain>
    </source>
</reference>
<reference key="4">
    <citation type="journal article" date="2009" name="Genome Res.">
        <title>Ortho-proteogenomics: multiple proteomes investigation through orthology and a new MS-based protocol.</title>
        <authorList>
            <person name="Gallien S."/>
            <person name="Perrodou E."/>
            <person name="Carapito C."/>
            <person name="Deshayes C."/>
            <person name="Reyrat J.-M."/>
            <person name="Van Dorsselaer A."/>
            <person name="Poch O."/>
            <person name="Schaeffer C."/>
            <person name="Lecompte O."/>
        </authorList>
    </citation>
    <scope>NUCLEOTIDE SEQUENCE [LARGE SCALE GENOMIC DNA]</scope>
    <source>
        <strain>ATCC 700084 / mc(2)155</strain>
    </source>
</reference>
<reference key="5">
    <citation type="journal article" date="2001" name="Microbiology">
        <title>Disruption of adhC reveals a large duplication in the Mycobacterium smegmatis mc(2)155 genome.</title>
        <authorList>
            <person name="Galamba A."/>
            <person name="Soetaert K."/>
            <person name="Wang X.M."/>
            <person name="De Bruyn J."/>
            <person name="Jacobs P."/>
            <person name="Content J."/>
        </authorList>
    </citation>
    <scope>GENE DUPLICATION</scope>
    <scope>DISRUPTION PHENOTYPE</scope>
</reference>
<reference key="6">
    <citation type="journal article" date="2010" name="Mol. Biosyst.">
        <title>Expansion of the mycobacterial 'PUPylome'.</title>
        <authorList>
            <person name="Watrous J."/>
            <person name="Burns K."/>
            <person name="Liu W.T."/>
            <person name="Patel A."/>
            <person name="Hook V."/>
            <person name="Bafna V."/>
            <person name="Barry C.E. III"/>
            <person name="Bark S."/>
            <person name="Dorrestein P.C."/>
        </authorList>
    </citation>
    <scope>PUPYLATION AT LYS-210</scope>
    <scope>IDENTIFICATION BY MASS SPECTROMETRY</scope>
</reference>
<evidence type="ECO:0000250" key="1"/>
<evidence type="ECO:0000269" key="2">
    <source>
    </source>
</evidence>
<evidence type="ECO:0000269" key="3">
    <source>
    </source>
</evidence>
<evidence type="ECO:0000269" key="4">
    <source>
    </source>
</evidence>
<evidence type="ECO:0000305" key="5"/>
<keyword id="KW-0903">Direct protein sequencing</keyword>
<keyword id="KW-1017">Isopeptide bond</keyword>
<keyword id="KW-0479">Metal-binding</keyword>
<keyword id="KW-0521">NADP</keyword>
<keyword id="KW-0560">Oxidoreductase</keyword>
<keyword id="KW-1185">Reference proteome</keyword>
<keyword id="KW-0832">Ubl conjugation</keyword>
<keyword id="KW-0862">Zinc</keyword>
<dbReference type="EC" id="1.1.1.2"/>
<dbReference type="EMBL" id="AJ291708">
    <property type="protein sequence ID" value="CAC35017.1"/>
    <property type="molecule type" value="Genomic_DNA"/>
</dbReference>
<dbReference type="EMBL" id="CP000480">
    <property type="protein sequence ID" value="ABK70232.1"/>
    <property type="molecule type" value="Genomic_DNA"/>
</dbReference>
<dbReference type="EMBL" id="CP001663">
    <property type="protein sequence ID" value="AFP37487.1"/>
    <property type="molecule type" value="Genomic_DNA"/>
</dbReference>
<dbReference type="RefSeq" id="WP_011727367.1">
    <property type="nucleotide sequence ID" value="NZ_SIJM01000053.1"/>
</dbReference>
<dbReference type="RefSeq" id="YP_885435.1">
    <property type="nucleotide sequence ID" value="NC_008596.1"/>
</dbReference>
<dbReference type="RefSeq" id="YP_886664.1">
    <property type="nucleotide sequence ID" value="NC_008596.1"/>
</dbReference>
<dbReference type="SMR" id="P0CH36"/>
<dbReference type="STRING" id="246196.MSMEG_1037"/>
<dbReference type="PaxDb" id="246196-MSMEI_1007"/>
<dbReference type="KEGG" id="msb:LJ00_05150"/>
<dbReference type="KEGG" id="msb:LJ00_11525"/>
<dbReference type="KEGG" id="msg:MSMEI_1007"/>
<dbReference type="KEGG" id="msm:MSMEG_1037"/>
<dbReference type="PATRIC" id="fig|246196.56.peg.1035"/>
<dbReference type="eggNOG" id="COG1064">
    <property type="taxonomic scope" value="Bacteria"/>
</dbReference>
<dbReference type="OrthoDB" id="3567264at2"/>
<dbReference type="SABIO-RK" id="P0CH36"/>
<dbReference type="Proteomes" id="UP000000757">
    <property type="component" value="Chromosome"/>
</dbReference>
<dbReference type="Proteomes" id="UP000006158">
    <property type="component" value="Chromosome"/>
</dbReference>
<dbReference type="GO" id="GO:0008106">
    <property type="term" value="F:alcohol dehydrogenase (NADP+) activity"/>
    <property type="evidence" value="ECO:0007669"/>
    <property type="project" value="UniProtKB-EC"/>
</dbReference>
<dbReference type="GO" id="GO:0008270">
    <property type="term" value="F:zinc ion binding"/>
    <property type="evidence" value="ECO:0007669"/>
    <property type="project" value="InterPro"/>
</dbReference>
<dbReference type="CDD" id="cd05283">
    <property type="entry name" value="CAD1"/>
    <property type="match status" value="1"/>
</dbReference>
<dbReference type="FunFam" id="3.40.50.720:FF:000022">
    <property type="entry name" value="Cinnamyl alcohol dehydrogenase"/>
    <property type="match status" value="1"/>
</dbReference>
<dbReference type="Gene3D" id="3.90.180.10">
    <property type="entry name" value="Medium-chain alcohol dehydrogenases, catalytic domain"/>
    <property type="match status" value="1"/>
</dbReference>
<dbReference type="Gene3D" id="3.40.50.720">
    <property type="entry name" value="NAD(P)-binding Rossmann-like Domain"/>
    <property type="match status" value="1"/>
</dbReference>
<dbReference type="InterPro" id="IPR013149">
    <property type="entry name" value="ADH-like_C"/>
</dbReference>
<dbReference type="InterPro" id="IPR013154">
    <property type="entry name" value="ADH-like_N"/>
</dbReference>
<dbReference type="InterPro" id="IPR002328">
    <property type="entry name" value="ADH_Zn_CS"/>
</dbReference>
<dbReference type="InterPro" id="IPR047109">
    <property type="entry name" value="CAD-like"/>
</dbReference>
<dbReference type="InterPro" id="IPR011032">
    <property type="entry name" value="GroES-like_sf"/>
</dbReference>
<dbReference type="InterPro" id="IPR036291">
    <property type="entry name" value="NAD(P)-bd_dom_sf"/>
</dbReference>
<dbReference type="InterPro" id="IPR020843">
    <property type="entry name" value="PKS_ER"/>
</dbReference>
<dbReference type="PANTHER" id="PTHR42683">
    <property type="entry name" value="ALDEHYDE REDUCTASE"/>
    <property type="match status" value="1"/>
</dbReference>
<dbReference type="Pfam" id="PF08240">
    <property type="entry name" value="ADH_N"/>
    <property type="match status" value="1"/>
</dbReference>
<dbReference type="Pfam" id="PF00107">
    <property type="entry name" value="ADH_zinc_N"/>
    <property type="match status" value="1"/>
</dbReference>
<dbReference type="SMART" id="SM00829">
    <property type="entry name" value="PKS_ER"/>
    <property type="match status" value="1"/>
</dbReference>
<dbReference type="SUPFAM" id="SSF50129">
    <property type="entry name" value="GroES-like"/>
    <property type="match status" value="1"/>
</dbReference>
<dbReference type="SUPFAM" id="SSF51735">
    <property type="entry name" value="NAD(P)-binding Rossmann-fold domains"/>
    <property type="match status" value="1"/>
</dbReference>
<dbReference type="PROSITE" id="PS00059">
    <property type="entry name" value="ADH_ZINC"/>
    <property type="match status" value="1"/>
</dbReference>
<comment type="function">
    <text>Prefers aldehydes over alcohols.</text>
</comment>
<comment type="catalytic activity">
    <reaction>
        <text>a primary alcohol + NADP(+) = an aldehyde + NADPH + H(+)</text>
        <dbReference type="Rhea" id="RHEA:15937"/>
        <dbReference type="ChEBI" id="CHEBI:15378"/>
        <dbReference type="ChEBI" id="CHEBI:15734"/>
        <dbReference type="ChEBI" id="CHEBI:17478"/>
        <dbReference type="ChEBI" id="CHEBI:57783"/>
        <dbReference type="ChEBI" id="CHEBI:58349"/>
        <dbReference type="EC" id="1.1.1.2"/>
    </reaction>
</comment>
<comment type="cofactor">
    <cofactor evidence="1">
        <name>Zn(2+)</name>
        <dbReference type="ChEBI" id="CHEBI:29105"/>
    </cofactor>
    <text evidence="1">Binds 2 Zn(2+) ions per subunit.</text>
</comment>
<comment type="biophysicochemical properties">
    <kinetics>
        <KM evidence="2">30 uM for octanal</KM>
        <KM evidence="2">40 uM for cinnamaldehyde</KM>
        <KM evidence="2">53 uM for benzaldehyde</KM>
    </kinetics>
</comment>
<comment type="induction">
    <text evidence="2">Has a higher specific activity when grown as a surface pellicle rather than in agitated cultures (at protein level).</text>
</comment>
<comment type="disruption phenotype">
    <text evidence="3">Not essential for growth, strains missing one copy or both grow slower and have a different morphology than wild-type.</text>
</comment>
<comment type="miscellaneous">
    <text>Pupylation of this protein has been demonstrated, however it is unknown if the protein concerned is the product of this gene, of the identical gene adhC2 (AC P0CH37), or of both genes.</text>
</comment>
<comment type="similarity">
    <text evidence="5">Belongs to the zinc-containing alcohol dehydrogenase family.</text>
</comment>